<proteinExistence type="evidence at protein level"/>
<evidence type="ECO:0000250" key="1">
    <source>
        <dbReference type="UniProtKB" id="P38798"/>
    </source>
</evidence>
<evidence type="ECO:0000250" key="2">
    <source>
        <dbReference type="UniProtKB" id="Q9HAU5"/>
    </source>
</evidence>
<evidence type="ECO:0000255" key="3"/>
<evidence type="ECO:0000256" key="4">
    <source>
        <dbReference type="SAM" id="MobiDB-lite"/>
    </source>
</evidence>
<evidence type="ECO:0000269" key="5">
    <source>
    </source>
</evidence>
<evidence type="ECO:0000269" key="6">
    <source>
    </source>
</evidence>
<evidence type="ECO:0000312" key="7">
    <source>
        <dbReference type="EMBL" id="AAI38359.1"/>
    </source>
</evidence>
<evidence type="ECO:0000312" key="8">
    <source>
        <dbReference type="MGI" id="MGI:2449307"/>
    </source>
</evidence>
<evidence type="ECO:0000312" key="9">
    <source>
        <dbReference type="Proteomes" id="UP000000589"/>
    </source>
</evidence>
<evidence type="ECO:0007744" key="10">
    <source>
    </source>
</evidence>
<keyword id="KW-0175">Coiled coil</keyword>
<keyword id="KW-0963">Cytoplasm</keyword>
<keyword id="KW-0866">Nonsense-mediated mRNA decay</keyword>
<keyword id="KW-0597">Phosphoprotein</keyword>
<keyword id="KW-1185">Reference proteome</keyword>
<keyword id="KW-0677">Repeat</keyword>
<keyword id="KW-0694">RNA-binding</keyword>
<accession>A2AT37</accession>
<comment type="function">
    <text evidence="2">Involved in nonsense-mediated decay (NMD) of mRNAs containing premature stop codons by associating with the nuclear exon junction complex (EJC). Recruited by UPF3B associated with the EJC core at the cytoplasmic side of the nuclear envelope and the subsequent formation of an UPF1-UPF2-UPF3 surveillance complex (including UPF1 bound to release factors at the stalled ribosome) is believed to activate NMD. In cooperation with UPF3B stimulates both ATPase and RNA helicase activities of UPF1. Binds spliced mRNA.</text>
</comment>
<comment type="subunit">
    <text evidence="2 6">Found in a post-splicing messenger ribonucleoprotein (mRNP) complex (By similarity). Associates with the exon junction complex (EJC) (By similarity). Interacts with SMG1, EST1A, UPF3A, UPF3B, EIF4A1 and EIF1 (By similarity). Interacts with UPF1; interaction is promoted by TDRD6 (PubMed:27149095). Interacts with DDX4 (PubMed:27149095).</text>
</comment>
<comment type="subcellular location">
    <subcellularLocation>
        <location evidence="2">Cytoplasm</location>
        <location evidence="2">Perinuclear region</location>
    </subcellularLocation>
    <subcellularLocation>
        <location evidence="6">Cytoplasm</location>
    </subcellularLocation>
</comment>
<comment type="tissue specificity">
    <text evidence="6">Localized in male germ cells.</text>
</comment>
<comment type="developmental stage">
    <text evidence="6">Weakly expressed in neonatal testes and expression increases during the development of spermatocytes and spermatids, in the late meiotic and postmeiotic stages of spermatogenesis.</text>
</comment>
<comment type="disruption phenotype">
    <text evidence="5">Knockout adult liver results in hepatosteatosis and disruption of liver homeostasis.</text>
</comment>
<reference key="1">
    <citation type="journal article" date="2009" name="PLoS Biol.">
        <title>Lineage-specific biology revealed by a finished genome assembly of the mouse.</title>
        <authorList>
            <person name="Church D.M."/>
            <person name="Goodstadt L."/>
            <person name="Hillier L.W."/>
            <person name="Zody M.C."/>
            <person name="Goldstein S."/>
            <person name="She X."/>
            <person name="Bult C.J."/>
            <person name="Agarwala R."/>
            <person name="Cherry J.L."/>
            <person name="DiCuccio M."/>
            <person name="Hlavina W."/>
            <person name="Kapustin Y."/>
            <person name="Meric P."/>
            <person name="Maglott D."/>
            <person name="Birtle Z."/>
            <person name="Marques A.C."/>
            <person name="Graves T."/>
            <person name="Zhou S."/>
            <person name="Teague B."/>
            <person name="Potamousis K."/>
            <person name="Churas C."/>
            <person name="Place M."/>
            <person name="Herschleb J."/>
            <person name="Runnheim R."/>
            <person name="Forrest D."/>
            <person name="Amos-Landgraf J."/>
            <person name="Schwartz D.C."/>
            <person name="Cheng Z."/>
            <person name="Lindblad-Toh K."/>
            <person name="Eichler E.E."/>
            <person name="Ponting C.P."/>
        </authorList>
    </citation>
    <scope>NUCLEOTIDE SEQUENCE [LARGE SCALE GENOMIC DNA]</scope>
    <source>
        <strain>C57BL/6J</strain>
    </source>
</reference>
<reference key="2">
    <citation type="journal article" date="2004" name="Genome Res.">
        <title>The status, quality, and expansion of the NIH full-length cDNA project: the Mammalian Gene Collection (MGC).</title>
        <authorList>
            <consortium name="The MGC Project Team"/>
        </authorList>
    </citation>
    <scope>NUCLEOTIDE SEQUENCE [LARGE SCALE MRNA]</scope>
    <source>
        <tissue evidence="7">Brain</tissue>
    </source>
</reference>
<reference evidence="10" key="3">
    <citation type="journal article" date="2010" name="Cell">
        <title>A tissue-specific atlas of mouse protein phosphorylation and expression.</title>
        <authorList>
            <person name="Huttlin E.L."/>
            <person name="Jedrychowski M.P."/>
            <person name="Elias J.E."/>
            <person name="Goswami T."/>
            <person name="Rad R."/>
            <person name="Beausoleil S.A."/>
            <person name="Villen J."/>
            <person name="Haas W."/>
            <person name="Sowa M.E."/>
            <person name="Gygi S.P."/>
        </authorList>
    </citation>
    <scope>IDENTIFICATION BY MASS SPECTROMETRY [LARGE SCALE ANALYSIS]</scope>
</reference>
<reference key="4">
    <citation type="journal article" date="2010" name="PLoS ONE">
        <title>UPF2 is a critical regulator of liver development, function and regeneration.</title>
        <authorList>
            <person name="Thoren L.A."/>
            <person name="Noergaard G.A."/>
            <person name="Weischenfeldt J."/>
            <person name="Waage J."/>
            <person name="Jakobsen J.S."/>
            <person name="Damgaard I."/>
            <person name="Bergstroem F.C."/>
            <person name="Blom A.M."/>
            <person name="Borup R."/>
            <person name="Bisgaard H.C."/>
            <person name="Porse B.T."/>
        </authorList>
    </citation>
    <scope>DISRUPTION PHENOTYPE</scope>
</reference>
<reference key="5">
    <citation type="journal article" date="2016" name="PLoS Genet.">
        <title>Chromatoid Body Protein TDRD6 Supports Long 3' UTR Triggered Nonsense Mediated mRNA Decay.</title>
        <authorList>
            <person name="Fanourgakis G."/>
            <person name="Lesche M."/>
            <person name="Akpinar M."/>
            <person name="Dahl A."/>
            <person name="Jessberger R."/>
        </authorList>
    </citation>
    <scope>INTERACTION WITH UPF1</scope>
    <scope>INTERACTION WITH MVH</scope>
    <scope>SUBCELLULAR LOCATION</scope>
    <scope>TISSUE SPECIFICITY</scope>
    <scope>DEVELOPMENTAL STAGE</scope>
</reference>
<dbReference type="EMBL" id="AL928735">
    <property type="status" value="NOT_ANNOTATED_CDS"/>
    <property type="molecule type" value="Genomic_DNA"/>
</dbReference>
<dbReference type="EMBL" id="AL928924">
    <property type="status" value="NOT_ANNOTATED_CDS"/>
    <property type="molecule type" value="Genomic_DNA"/>
</dbReference>
<dbReference type="EMBL" id="CR388026">
    <property type="status" value="NOT_ANNOTATED_CDS"/>
    <property type="molecule type" value="Genomic_DNA"/>
</dbReference>
<dbReference type="EMBL" id="BC138358">
    <property type="protein sequence ID" value="AAI38359.1"/>
    <property type="molecule type" value="mRNA"/>
</dbReference>
<dbReference type="EMBL" id="BC138359">
    <property type="protein sequence ID" value="AAI38360.1"/>
    <property type="molecule type" value="mRNA"/>
</dbReference>
<dbReference type="CCDS" id="CCDS38041.1"/>
<dbReference type="RefSeq" id="NP_001074601.1">
    <property type="nucleotide sequence ID" value="NM_001081132.1"/>
</dbReference>
<dbReference type="RefSeq" id="XP_006497548.1">
    <property type="nucleotide sequence ID" value="XM_006497485.5"/>
</dbReference>
<dbReference type="SMR" id="A2AT37"/>
<dbReference type="FunCoup" id="A2AT37">
    <property type="interactions" value="4791"/>
</dbReference>
<dbReference type="IntAct" id="A2AT37">
    <property type="interactions" value="1"/>
</dbReference>
<dbReference type="STRING" id="10090.ENSMUSP00000058375"/>
<dbReference type="iPTMnet" id="A2AT37"/>
<dbReference type="PhosphoSitePlus" id="A2AT37"/>
<dbReference type="SwissPalm" id="A2AT37"/>
<dbReference type="jPOST" id="A2AT37"/>
<dbReference type="PaxDb" id="10090-ENSMUSP00000058375"/>
<dbReference type="PeptideAtlas" id="A2AT37"/>
<dbReference type="ProteomicsDB" id="343380"/>
<dbReference type="Pumba" id="A2AT37"/>
<dbReference type="Antibodypedia" id="24600">
    <property type="antibodies" value="166 antibodies from 27 providers"/>
</dbReference>
<dbReference type="Ensembl" id="ENSMUST00000060092.13">
    <property type="protein sequence ID" value="ENSMUSP00000058375.7"/>
    <property type="gene ID" value="ENSMUSG00000043241.15"/>
</dbReference>
<dbReference type="GeneID" id="326622"/>
<dbReference type="KEGG" id="mmu:326622"/>
<dbReference type="UCSC" id="uc008igc.1">
    <property type="organism name" value="mouse"/>
</dbReference>
<dbReference type="AGR" id="MGI:2449307"/>
<dbReference type="CTD" id="26019"/>
<dbReference type="MGI" id="MGI:2449307">
    <property type="gene designation" value="Upf2"/>
</dbReference>
<dbReference type="VEuPathDB" id="HostDB:ENSMUSG00000043241"/>
<dbReference type="eggNOG" id="KOG2051">
    <property type="taxonomic scope" value="Eukaryota"/>
</dbReference>
<dbReference type="GeneTree" id="ENSGT00530000064318"/>
<dbReference type="HOGENOM" id="CLU_002633_2_1_1"/>
<dbReference type="InParanoid" id="A2AT37"/>
<dbReference type="OMA" id="DFQHHQI"/>
<dbReference type="OrthoDB" id="27832at2759"/>
<dbReference type="PhylomeDB" id="A2AT37"/>
<dbReference type="TreeFam" id="TF300543"/>
<dbReference type="Reactome" id="R-MMU-975957">
    <property type="pathway name" value="Nonsense Mediated Decay (NMD) enhanced by the Exon Junction Complex (EJC)"/>
</dbReference>
<dbReference type="BioGRID-ORCS" id="326622">
    <property type="hits" value="26 hits in 79 CRISPR screens"/>
</dbReference>
<dbReference type="ChiTaRS" id="Upf2">
    <property type="organism name" value="mouse"/>
</dbReference>
<dbReference type="PRO" id="PR:A2AT37"/>
<dbReference type="Proteomes" id="UP000000589">
    <property type="component" value="Chromosome 2"/>
</dbReference>
<dbReference type="RNAct" id="A2AT37">
    <property type="molecule type" value="protein"/>
</dbReference>
<dbReference type="Bgee" id="ENSMUSG00000043241">
    <property type="expression patterns" value="Expressed in ureter smooth muscle and 250 other cell types or tissues"/>
</dbReference>
<dbReference type="ExpressionAtlas" id="A2AT37">
    <property type="expression patterns" value="baseline and differential"/>
</dbReference>
<dbReference type="GO" id="GO:0005737">
    <property type="term" value="C:cytoplasm"/>
    <property type="evidence" value="ECO:0000266"/>
    <property type="project" value="MGI"/>
</dbReference>
<dbReference type="GO" id="GO:0036464">
    <property type="term" value="C:cytoplasmic ribonucleoprotein granule"/>
    <property type="evidence" value="ECO:0007669"/>
    <property type="project" value="Ensembl"/>
</dbReference>
<dbReference type="GO" id="GO:0005829">
    <property type="term" value="C:cytosol"/>
    <property type="evidence" value="ECO:0000304"/>
    <property type="project" value="Reactome"/>
</dbReference>
<dbReference type="GO" id="GO:0035145">
    <property type="term" value="C:exon-exon junction complex"/>
    <property type="evidence" value="ECO:0007669"/>
    <property type="project" value="Ensembl"/>
</dbReference>
<dbReference type="GO" id="GO:0048471">
    <property type="term" value="C:perinuclear region of cytoplasm"/>
    <property type="evidence" value="ECO:0000266"/>
    <property type="project" value="MGI"/>
</dbReference>
<dbReference type="GO" id="GO:0003723">
    <property type="term" value="F:RNA binding"/>
    <property type="evidence" value="ECO:0007669"/>
    <property type="project" value="UniProtKB-KW"/>
</dbReference>
<dbReference type="GO" id="GO:0042162">
    <property type="term" value="F:telomeric DNA binding"/>
    <property type="evidence" value="ECO:0007669"/>
    <property type="project" value="Ensembl"/>
</dbReference>
<dbReference type="GO" id="GO:0031100">
    <property type="term" value="P:animal organ regeneration"/>
    <property type="evidence" value="ECO:0000315"/>
    <property type="project" value="MGI"/>
</dbReference>
<dbReference type="GO" id="GO:0001889">
    <property type="term" value="P:liver development"/>
    <property type="evidence" value="ECO:0000315"/>
    <property type="project" value="MGI"/>
</dbReference>
<dbReference type="GO" id="GO:0000184">
    <property type="term" value="P:nuclear-transcribed mRNA catabolic process, nonsense-mediated decay"/>
    <property type="evidence" value="ECO:0007669"/>
    <property type="project" value="UniProtKB-KW"/>
</dbReference>
<dbReference type="GO" id="GO:0006986">
    <property type="term" value="P:response to unfolded protein"/>
    <property type="evidence" value="ECO:0000266"/>
    <property type="project" value="MGI"/>
</dbReference>
<dbReference type="FunFam" id="1.25.40.180:FF:000014">
    <property type="entry name" value="Putative regulator of nonsense transcripts 2"/>
    <property type="match status" value="1"/>
</dbReference>
<dbReference type="FunFam" id="4.10.80.160:FF:000002">
    <property type="entry name" value="Putative regulator of nonsense transcripts 2"/>
    <property type="match status" value="1"/>
</dbReference>
<dbReference type="FunFam" id="1.25.40.180:FF:000015">
    <property type="entry name" value="regulator of nonsense transcripts 2 isoform X1"/>
    <property type="match status" value="1"/>
</dbReference>
<dbReference type="FunFam" id="1.25.40.180:FF:000023">
    <property type="entry name" value="regulator of nonsense transcripts 2 isoform X1"/>
    <property type="match status" value="1"/>
</dbReference>
<dbReference type="Gene3D" id="1.25.40.180">
    <property type="match status" value="3"/>
</dbReference>
<dbReference type="Gene3D" id="4.10.80.160">
    <property type="match status" value="1"/>
</dbReference>
<dbReference type="Gene3D" id="6.10.250.770">
    <property type="match status" value="1"/>
</dbReference>
<dbReference type="InterPro" id="IPR016024">
    <property type="entry name" value="ARM-type_fold"/>
</dbReference>
<dbReference type="InterPro" id="IPR003890">
    <property type="entry name" value="MIF4G-like_typ-3"/>
</dbReference>
<dbReference type="InterPro" id="IPR039762">
    <property type="entry name" value="Nmd2/UPF2"/>
</dbReference>
<dbReference type="InterPro" id="IPR007193">
    <property type="entry name" value="Upf2/Nmd2_C"/>
</dbReference>
<dbReference type="PANTHER" id="PTHR12839">
    <property type="entry name" value="NONSENSE-MEDIATED MRNA DECAY PROTEIN 2 UP-FRAMESHIFT SUPPRESSOR 2"/>
    <property type="match status" value="1"/>
</dbReference>
<dbReference type="PANTHER" id="PTHR12839:SF7">
    <property type="entry name" value="REGULATOR OF NONSENSE TRANSCRIPTS 2"/>
    <property type="match status" value="1"/>
</dbReference>
<dbReference type="Pfam" id="PF02854">
    <property type="entry name" value="MIF4G"/>
    <property type="match status" value="3"/>
</dbReference>
<dbReference type="Pfam" id="PF04050">
    <property type="entry name" value="Upf2"/>
    <property type="match status" value="1"/>
</dbReference>
<dbReference type="SMART" id="SM00543">
    <property type="entry name" value="MIF4G"/>
    <property type="match status" value="3"/>
</dbReference>
<dbReference type="SUPFAM" id="SSF48371">
    <property type="entry name" value="ARM repeat"/>
    <property type="match status" value="3"/>
</dbReference>
<gene>
    <name evidence="8" type="primary">Upf2</name>
    <name evidence="2" type="synonym">RENT2</name>
</gene>
<sequence>MPAERKKSASMEEKESLLNNKEKDCSERRPVSSKEKPRDDLKVTAKKEVSKVPEDKKKRLEEDKRKKEDKERKKKEEEKVKAEEELKKKEEEEKKKQEEEERKKQEEQAKRQQEEAAAQLKEKEESLQLHQEAWERHQLRKELRSKNQNAPDNRPEENFFSRLDSSLKKNTAFVKKLKTITEQQRDSLSHDFNGLNLSKYIAEAVASIVEAKLKLSDVNCAAHLCSLFHQRYSDFAPSLLQVWKKHFEARKEEKTPNITKLRTDLRFIAELTIVGIFTDKEGLSLIYEQLKSIINADRESHTHVSVVISFCRHCGDDIAGLVPRKVKSAAEKFNLSFPPSEIISPEKQQPFQNLLKEYFTSLTKHLKRDHRELQNTERQNRRILHSKGELSEDRHKQYEEFAMSYQKLLANSQSLADLLDENMPDLPQDKPTPEEHGPGIDIFTPGKPGEYDLEGGIWEDEDARNFYENLIDLKAFVPAILFKDNEKSQNKDSNKDDSKEAKEPKDNKEASSPDDLELELENLEINDDTLELEGADEAEDLTKKLLDEQEQEDEEASTGSHLKLIVDAFLQQLPNCVNRDLIDKAAMDFCMNMNTKANRKKLVRALFIVPRQRLDLLPFYARLVATLHPCMSDVAEDLCSMLRGDFRFHVRKKDQINIETKNKTVRFIGELTKFKMFTKNDTLHCLKMLLSDFSHHHIEMACTLLETCGRFLFRSPESHLRTSVLLEQMMRKKQAMHLDARYVTMVENAYYYCNPPPAEKTVRKKRPPLQEYVRKLLYKDLSKVTTEKVLRQMRKLPWQDQEVKDYVICCMINIWNVKYNSIHCVANLLAGLVLYQEDVGIHVVDGVLEDIRLGMEVNQPKFNQRRISSAKFLGELYNYRMVESAVIFRTLYSFTSFGVNPDGSPSSLDPPEHLFRIRLVCTILDTCGQYFDRGSSKRKLDCFLVYFQRYVWWKKSLEVWTKDHPFPIDIDYMISDTLELLRPKIKLCNSLEESIRQVQDLEREFLIKLGLVNDKESKDSMTEGENLEEDEEEEEGGAETEEQSGNESEVNEPEEEEGSEEEEEGEEEEEENTDYLTDSNKENETDEENAEVMIKGGGLKHVPCVEDEDFIQALDKMMLENLQQRSGESVKVHQLDVAIPLHLKSQLRKGPPLGGGEGETESADTMPFVMLTRKGNKQQFKILNVPMSSQLAANHWNQQQAEQEERMRMKKLTLDINERQEQEDYQEMLQSLAQRPAPANTNRERRPRYQHPKGAPNADLIFKTGGRRR</sequence>
<feature type="chain" id="PRO_0000448685" description="Regulator of nonsense transcripts 2">
    <location>
        <begin position="1"/>
        <end position="1269"/>
    </location>
</feature>
<feature type="domain" description="MIF4G 1" evidence="3">
    <location>
        <begin position="168"/>
        <end position="396"/>
    </location>
</feature>
<feature type="domain" description="MIF4G 2" evidence="3">
    <location>
        <begin position="571"/>
        <end position="755"/>
    </location>
</feature>
<feature type="domain" description="MIF4G 3" evidence="3">
    <location>
        <begin position="774"/>
        <end position="984"/>
    </location>
</feature>
<feature type="region of interest" description="Disordered" evidence="4">
    <location>
        <begin position="1"/>
        <end position="125"/>
    </location>
</feature>
<feature type="region of interest" description="Sufficient for interaction with UPF1" evidence="2">
    <location>
        <begin position="94"/>
        <end position="132"/>
    </location>
</feature>
<feature type="region of interest" description="Disordered" evidence="4">
    <location>
        <begin position="143"/>
        <end position="162"/>
    </location>
</feature>
<feature type="region of interest" description="Disordered" evidence="4">
    <location>
        <begin position="422"/>
        <end position="444"/>
    </location>
</feature>
<feature type="region of interest" description="Disordered" evidence="4">
    <location>
        <begin position="487"/>
        <end position="518"/>
    </location>
</feature>
<feature type="region of interest" description="Sufficient for interaction with UPF3A and UPF3B" evidence="2">
    <location>
        <begin position="709"/>
        <end position="926"/>
    </location>
</feature>
<feature type="region of interest" description="Sufficient for interaction with EIF4A1 and EIF1" evidence="2">
    <location>
        <begin position="755"/>
        <end position="1269"/>
    </location>
</feature>
<feature type="region of interest" description="Binds to UPF3B" evidence="2">
    <location>
        <begin position="837"/>
        <end position="857"/>
    </location>
</feature>
<feature type="region of interest" description="Disordered" evidence="4">
    <location>
        <begin position="1017"/>
        <end position="1090"/>
    </location>
</feature>
<feature type="region of interest" description="Sufficient for interaction with UPF1 C-terminus" evidence="2">
    <location>
        <begin position="1081"/>
        <end position="1269"/>
    </location>
</feature>
<feature type="region of interest" description="Necessary for interaction with UPF1" evidence="2">
    <location>
        <begin position="1102"/>
        <end position="1195"/>
    </location>
</feature>
<feature type="region of interest" description="Interaction with UPF1" evidence="2">
    <location>
        <begin position="1102"/>
        <end position="1126"/>
    </location>
</feature>
<feature type="region of interest" description="Interaction with UPF1" evidence="2">
    <location>
        <begin position="1164"/>
        <end position="1204"/>
    </location>
</feature>
<feature type="region of interest" description="Disordered" evidence="4">
    <location>
        <begin position="1218"/>
        <end position="1269"/>
    </location>
</feature>
<feature type="coiled-coil region" evidence="3">
    <location>
        <begin position="57"/>
        <end position="133"/>
    </location>
</feature>
<feature type="compositionally biased region" description="Basic and acidic residues" evidence="4">
    <location>
        <begin position="427"/>
        <end position="438"/>
    </location>
</feature>
<feature type="compositionally biased region" description="Basic and acidic residues" evidence="4">
    <location>
        <begin position="487"/>
        <end position="511"/>
    </location>
</feature>
<feature type="compositionally biased region" description="Acidic residues" evidence="4">
    <location>
        <begin position="1025"/>
        <end position="1073"/>
    </location>
</feature>
<feature type="modified residue" description="Phosphothreonine" evidence="2">
    <location>
        <position position="1085"/>
    </location>
</feature>
<organism evidence="9">
    <name type="scientific">Mus musculus</name>
    <name type="common">Mouse</name>
    <dbReference type="NCBI Taxonomy" id="10090"/>
    <lineage>
        <taxon>Eukaryota</taxon>
        <taxon>Metazoa</taxon>
        <taxon>Chordata</taxon>
        <taxon>Craniata</taxon>
        <taxon>Vertebrata</taxon>
        <taxon>Euteleostomi</taxon>
        <taxon>Mammalia</taxon>
        <taxon>Eutheria</taxon>
        <taxon>Euarchontoglires</taxon>
        <taxon>Glires</taxon>
        <taxon>Rodentia</taxon>
        <taxon>Myomorpha</taxon>
        <taxon>Muroidea</taxon>
        <taxon>Muridae</taxon>
        <taxon>Murinae</taxon>
        <taxon>Mus</taxon>
        <taxon>Mus</taxon>
    </lineage>
</organism>
<name>RENT2_MOUSE</name>
<protein>
    <recommendedName>
        <fullName evidence="2">Regulator of nonsense transcripts 2</fullName>
    </recommendedName>
    <alternativeName>
        <fullName evidence="1">Up-frameshift suppressor 2 homolog</fullName>
        <shortName>Upf2</shortName>
    </alternativeName>
</protein>